<feature type="signal peptide" evidence="6">
    <location>
        <begin position="1"/>
        <end position="22"/>
    </location>
</feature>
<feature type="propeptide" id="PRO_0000001769" evidence="1">
    <location>
        <begin position="23"/>
        <end position="41"/>
    </location>
</feature>
<feature type="peptide" id="PRO_0000001770" description="Apelin-36">
    <location>
        <begin position="42"/>
        <end position="77"/>
    </location>
</feature>
<feature type="peptide" id="PRO_0000001771" description="Apelin-31" evidence="1">
    <location>
        <begin position="47"/>
        <end position="77"/>
    </location>
</feature>
<feature type="peptide" id="PRO_0000001772" description="Apelin-28" evidence="1">
    <location>
        <begin position="50"/>
        <end position="77"/>
    </location>
</feature>
<feature type="peptide" id="PRO_0000001773" description="Apelin-13">
    <location>
        <begin position="65"/>
        <end position="77"/>
    </location>
</feature>
<feature type="region of interest" description="Disordered" evidence="7">
    <location>
        <begin position="45"/>
        <end position="77"/>
    </location>
</feature>
<feature type="compositionally biased region" description="Basic residues" evidence="7">
    <location>
        <begin position="58"/>
        <end position="71"/>
    </location>
</feature>
<feature type="site" description="Important for the balance between G(i) and beta-arrestin pathways induced by apelin-13-APLNR system" evidence="5">
    <location>
        <position position="75"/>
    </location>
</feature>
<feature type="site" description="Important for the balance between G(i) and beta-arrestin pathways induced by apelin-13-APLNR system" evidence="5">
    <location>
        <position position="77"/>
    </location>
</feature>
<keyword id="KW-0037">Angiogenesis</keyword>
<keyword id="KW-0165">Cleavage on pair of basic residues</keyword>
<keyword id="KW-0217">Developmental protein</keyword>
<keyword id="KW-0306">Gastrulation</keyword>
<keyword id="KW-0372">Hormone</keyword>
<keyword id="KW-1185">Reference proteome</keyword>
<keyword id="KW-0964">Secreted</keyword>
<keyword id="KW-0732">Signal</keyword>
<reference key="1">
    <citation type="journal article" date="1999" name="Biochim. Biophys. Acta">
        <title>Apelin, the natural ligand of the orphan receptor APJ, is abundantly secreted in the colostrum.</title>
        <authorList>
            <person name="Habata Y."/>
            <person name="Fujii R."/>
            <person name="Hosoya M."/>
            <person name="Fukusumi S."/>
            <person name="Kawamata Y."/>
            <person name="Hinuma S."/>
            <person name="Kitada C."/>
            <person name="Nishizawa N."/>
            <person name="Murosaki S."/>
            <person name="Kurokawa T."/>
            <person name="Onda H."/>
            <person name="Tatemoto K."/>
            <person name="Fujino M."/>
        </authorList>
    </citation>
    <scope>NUCLEOTIDE SEQUENCE [MRNA]</scope>
    <scope>SUBCELLULAR LOCATION</scope>
    <scope>TISSUE SPECIFICITY</scope>
    <scope>INDUCTION</scope>
    <source>
        <tissue>Brain</tissue>
    </source>
</reference>
<reference key="2">
    <citation type="journal article" date="2000" name="J. Neurochem.">
        <title>Characterization of apelin, the ligand for the APJ receptor.</title>
        <authorList>
            <person name="Lee D.K."/>
            <person name="Cheng R."/>
            <person name="Nguyen T."/>
            <person name="Fan T."/>
            <person name="Kariyawasam A.P."/>
            <person name="Liu Y."/>
            <person name="Osmond D.H."/>
            <person name="George S.R."/>
            <person name="O'Dowd B.F."/>
        </authorList>
    </citation>
    <scope>NUCLEOTIDE SEQUENCE [MRNA]</scope>
    <scope>FUNCTION</scope>
    <scope>TISSUE SPECIFICITY</scope>
    <source>
        <tissue>Brain</tissue>
    </source>
</reference>
<reference key="3">
    <citation type="journal article" date="2004" name="Genome Res.">
        <title>The status, quality, and expansion of the NIH full-length cDNA project: the Mammalian Gene Collection (MGC).</title>
        <authorList>
            <consortium name="The MGC Project Team"/>
        </authorList>
    </citation>
    <scope>NUCLEOTIDE SEQUENCE [LARGE SCALE MRNA]</scope>
    <source>
        <tissue>Lung</tissue>
    </source>
</reference>
<reference key="4">
    <citation type="journal article" date="2001" name="Biochim. Biophys. Acta">
        <title>Molecular properties of apelin: tissue distribution and receptor binding.</title>
        <authorList>
            <person name="Kawamata Y."/>
            <person name="Habata Y."/>
            <person name="Fukusumi S."/>
            <person name="Hosoya M."/>
            <person name="Fujii R."/>
            <person name="Hinuma S."/>
            <person name="Nishizawa N."/>
            <person name="Kitada C."/>
            <person name="Onda H."/>
            <person name="Nishimura O."/>
            <person name="Fujino M."/>
        </authorList>
    </citation>
    <scope>FUNCTION</scope>
    <scope>TISSUE SPECIFICITY</scope>
</reference>
<reference key="5">
    <citation type="journal article" date="2001" name="J. Neurochem.">
        <title>Physiological role of a novel neuropeptide, apelin, and its receptor in the rat brain.</title>
        <authorList>
            <person name="Reaux A."/>
            <person name="De Mota N."/>
            <person name="Skultetyova I."/>
            <person name="Lenkei Z."/>
            <person name="El Messari S."/>
            <person name="Gallatz K."/>
            <person name="Corvol P."/>
            <person name="Palkovits M."/>
            <person name="Llorens-Cortes C."/>
        </authorList>
    </citation>
    <scope>FUNCTION</scope>
    <scope>TISSUE SPECIFICITY</scope>
</reference>
<reference key="6">
    <citation type="journal article" date="2016" name="Basic Res. Cardiol.">
        <title>Characterization of apela, a novel endogenous ligand of apelin receptor, in the adult heart.</title>
        <authorList>
            <person name="Perjes A."/>
            <person name="Kilpioe T."/>
            <person name="Ulvila J."/>
            <person name="Magga J."/>
            <person name="Alakoski T."/>
            <person name="Szabo Z."/>
            <person name="Vainio L."/>
            <person name="Halmetoja E."/>
            <person name="Vuolteenaho O."/>
            <person name="Petaejae-Repo U."/>
            <person name="Szokodi I."/>
            <person name="Kerkelae R."/>
        </authorList>
    </citation>
    <scope>FUNCTION</scope>
</reference>
<organism>
    <name type="scientific">Rattus norvegicus</name>
    <name type="common">Rat</name>
    <dbReference type="NCBI Taxonomy" id="10116"/>
    <lineage>
        <taxon>Eukaryota</taxon>
        <taxon>Metazoa</taxon>
        <taxon>Chordata</taxon>
        <taxon>Craniata</taxon>
        <taxon>Vertebrata</taxon>
        <taxon>Euteleostomi</taxon>
        <taxon>Mammalia</taxon>
        <taxon>Eutheria</taxon>
        <taxon>Euarchontoglires</taxon>
        <taxon>Glires</taxon>
        <taxon>Rodentia</taxon>
        <taxon>Myomorpha</taxon>
        <taxon>Muroidea</taxon>
        <taxon>Muridae</taxon>
        <taxon>Murinae</taxon>
        <taxon>Rattus</taxon>
    </lineage>
</organism>
<sequence>MNLSFCVQALLLLWLSLTAVCGVPLMLPPDGKGLEEGNMRYLVKPRTSRTGPGAWQGGRRKFRRQRPRLSHKGPMPF</sequence>
<comment type="function">
    <text evidence="2 3 5 9 10 11 12">Peptide hormone that functions as endogenous ligand for the G-protein-coupled apelin receptor (APLNR/APJ), that plays a role in cadiovascular homeostasis (PubMed:11336787, PubMed:11359874, PubMed:26611206). Functions as a balanced agonist activating both G(i) protein pathway and beta-arrestin pathway of APLNR (By similarity). Downstream G proteins activation, apelin can inhibit cAMP production and activate key intracellular effectors such as ERKs (PubMed:26611206). On the other hand, APLNR activation induces beta-arrestin recruitment to the membrane leading to desensitization and internalization of the receptor (PubMed:11359874). Apelin blunts cardiac hypertrophic induction from APLNR on response to pathological stimuli, but also induces myocardial hypertrophy under normal conditions (By similarity). Apelin-36 dissociates more hardly than (pyroglu)apelin-13 from APLNR (PubMed:11336787). Involved in the regulation of cardiac precursor cell movements during gastrulation and heart morphogenesis (By similarity). Has an inhibitory effect on cytokine production in response to T-cell receptor/CD3 cross-linking; the oral intake of apelin in the colostrum and the milk might therefore modulate immune responses in neonates. Plays a role in early coronary blood vessels formation (By similarity). Mediates myocardial contractility in an ERK1/2-dependent manner (PubMed:11359874, PubMed:26611206). May also have a role in the central control of body fluid homeostasis by influencing vasopressin release and drinking behavior (PubMed:10617103).</text>
</comment>
<comment type="subcellular location">
    <subcellularLocation>
        <location evidence="8">Secreted</location>
    </subcellularLocation>
    <subcellularLocation>
        <location evidence="8">Secreted</location>
        <location evidence="8">Extracellular space</location>
    </subcellularLocation>
    <text evidence="4">Abundantly secreted in the colostrum (By similarity). Lower level in milk (PubMed:10525157). Decreases rapidly within several days after parturition in milk, but is still detectable even in commercial milk (By similarity).</text>
</comment>
<comment type="tissue specificity">
    <text evidence="8 9 10 11">Expressed in the lung, testis, ovary, uterus and mammary gland (PubMed:11336787). Expressed in neurons in the thalamic paraventricular and hypothalamic supraoptic nuclei (PubMed:11359874). The lung, testis and uterus mainly contain a large form that looks like apelin-36, whereas the mammary gland seems to contain 2 forms of apelin, a large form close to apelin-36 and a small form close to apelin-13 (at protein level) (PubMed:11336787). Widely expressed in the adult, with highest levels in the mammary gland of lactating animals, very high levels in the lung, intermediate levels in the spinal cord, ovary, adipose tissue, brain (neuronal cell bodies and fibers in the supraoptic and the paraventricular nuclei), heart and testis, and lowest levels in the pituitary gland, kidney, stomach, uterus and pancreas (PubMed:10525157, PubMed:10617103, PubMed:11336787).</text>
</comment>
<comment type="developmental stage">
    <text>Highly expressed in neonatal tissues. In the adult, reaches a maximal level around parturition.</text>
</comment>
<comment type="induction">
    <text evidence="8">During pregnancy and lactation (PubMed:10525157).</text>
</comment>
<comment type="PTM">
    <text evidence="4">Several active peptides may be produced by proteolytic processing of the peptide precursor.</text>
</comment>
<comment type="similarity">
    <text evidence="13">Belongs to the apelin family.</text>
</comment>
<accession>Q9R0R3</accession>
<evidence type="ECO:0000250" key="1"/>
<evidence type="ECO:0000250" key="2">
    <source>
        <dbReference type="UniProtKB" id="Q4TTN8"/>
    </source>
</evidence>
<evidence type="ECO:0000250" key="3">
    <source>
        <dbReference type="UniProtKB" id="Q9R0R4"/>
    </source>
</evidence>
<evidence type="ECO:0000250" key="4">
    <source>
        <dbReference type="UniProtKB" id="Q9TUI9"/>
    </source>
</evidence>
<evidence type="ECO:0000250" key="5">
    <source>
        <dbReference type="UniProtKB" id="Q9ULZ1"/>
    </source>
</evidence>
<evidence type="ECO:0000255" key="6"/>
<evidence type="ECO:0000256" key="7">
    <source>
        <dbReference type="SAM" id="MobiDB-lite"/>
    </source>
</evidence>
<evidence type="ECO:0000269" key="8">
    <source>
    </source>
</evidence>
<evidence type="ECO:0000269" key="9">
    <source>
    </source>
</evidence>
<evidence type="ECO:0000269" key="10">
    <source>
    </source>
</evidence>
<evidence type="ECO:0000269" key="11">
    <source>
    </source>
</evidence>
<evidence type="ECO:0000269" key="12">
    <source>
    </source>
</evidence>
<evidence type="ECO:0000305" key="13"/>
<evidence type="ECO:0000312" key="14">
    <source>
        <dbReference type="RGD" id="620672"/>
    </source>
</evidence>
<protein>
    <recommendedName>
        <fullName>Apelin</fullName>
    </recommendedName>
    <alternativeName>
        <fullName>APJ endogenous ligand</fullName>
    </alternativeName>
    <component>
        <recommendedName>
            <fullName>Apelin-36</fullName>
        </recommendedName>
    </component>
    <component>
        <recommendedName>
            <fullName>Apelin-31</fullName>
        </recommendedName>
    </component>
    <component>
        <recommendedName>
            <fullName>Apelin-28</fullName>
        </recommendedName>
    </component>
    <component>
        <recommendedName>
            <fullName>Apelin-13</fullName>
        </recommendedName>
    </component>
</protein>
<name>APEL_RAT</name>
<dbReference type="EMBL" id="AB023495">
    <property type="protein sequence ID" value="BAA84977.1"/>
    <property type="molecule type" value="mRNA"/>
</dbReference>
<dbReference type="EMBL" id="AF179679">
    <property type="protein sequence ID" value="AAF25814.1"/>
    <property type="molecule type" value="mRNA"/>
</dbReference>
<dbReference type="EMBL" id="BC080843">
    <property type="protein sequence ID" value="AAH80843.1"/>
    <property type="molecule type" value="mRNA"/>
</dbReference>
<dbReference type="RefSeq" id="NP_113800.1">
    <property type="nucleotide sequence ID" value="NM_031612.3"/>
</dbReference>
<dbReference type="RefSeq" id="XP_038955928.1">
    <property type="nucleotide sequence ID" value="XM_039100000.2"/>
</dbReference>
<dbReference type="BMRB" id="Q9R0R3"/>
<dbReference type="FunCoup" id="Q9R0R3">
    <property type="interactions" value="31"/>
</dbReference>
<dbReference type="STRING" id="10116.ENSRNOP00000005331"/>
<dbReference type="BindingDB" id="Q9R0R3"/>
<dbReference type="PaxDb" id="10116-ENSRNOP00000005331"/>
<dbReference type="GeneID" id="58812"/>
<dbReference type="KEGG" id="rno:58812"/>
<dbReference type="UCSC" id="RGD:620672">
    <property type="organism name" value="rat"/>
</dbReference>
<dbReference type="AGR" id="RGD:620672"/>
<dbReference type="CTD" id="8862"/>
<dbReference type="RGD" id="620672">
    <property type="gene designation" value="Apln"/>
</dbReference>
<dbReference type="eggNOG" id="ENOG502S9TY">
    <property type="taxonomic scope" value="Eukaryota"/>
</dbReference>
<dbReference type="HOGENOM" id="CLU_198461_0_0_1"/>
<dbReference type="InParanoid" id="Q9R0R3"/>
<dbReference type="OrthoDB" id="9892041at2759"/>
<dbReference type="PhylomeDB" id="Q9R0R3"/>
<dbReference type="TreeFam" id="TF339660"/>
<dbReference type="Reactome" id="R-RNO-375276">
    <property type="pathway name" value="Peptide ligand-binding receptors"/>
</dbReference>
<dbReference type="Reactome" id="R-RNO-418594">
    <property type="pathway name" value="G alpha (i) signalling events"/>
</dbReference>
<dbReference type="PRO" id="PR:Q9R0R3"/>
<dbReference type="Proteomes" id="UP000002494">
    <property type="component" value="Chromosome X"/>
</dbReference>
<dbReference type="Bgee" id="ENSRNOG00000003984">
    <property type="expression patterns" value="Expressed in lung and 17 other cell types or tissues"/>
</dbReference>
<dbReference type="GO" id="GO:0005576">
    <property type="term" value="C:extracellular region"/>
    <property type="evidence" value="ECO:0000266"/>
    <property type="project" value="RGD"/>
</dbReference>
<dbReference type="GO" id="GO:0005615">
    <property type="term" value="C:extracellular space"/>
    <property type="evidence" value="ECO:0000314"/>
    <property type="project" value="RGD"/>
</dbReference>
<dbReference type="GO" id="GO:0048471">
    <property type="term" value="C:perinuclear region of cytoplasm"/>
    <property type="evidence" value="ECO:0000314"/>
    <property type="project" value="RGD"/>
</dbReference>
<dbReference type="GO" id="GO:0031704">
    <property type="term" value="F:apelin receptor binding"/>
    <property type="evidence" value="ECO:0000314"/>
    <property type="project" value="UniProtKB"/>
</dbReference>
<dbReference type="GO" id="GO:0005179">
    <property type="term" value="F:hormone activity"/>
    <property type="evidence" value="ECO:0000250"/>
    <property type="project" value="UniProtKB"/>
</dbReference>
<dbReference type="GO" id="GO:0042802">
    <property type="term" value="F:identical protein binding"/>
    <property type="evidence" value="ECO:0000353"/>
    <property type="project" value="RGD"/>
</dbReference>
<dbReference type="GO" id="GO:0001525">
    <property type="term" value="P:angiogenesis"/>
    <property type="evidence" value="ECO:0007669"/>
    <property type="project" value="UniProtKB-KW"/>
</dbReference>
<dbReference type="GO" id="GO:0060183">
    <property type="term" value="P:apelin receptor signaling pathway"/>
    <property type="evidence" value="ECO:0000314"/>
    <property type="project" value="UniProtKB"/>
</dbReference>
<dbReference type="GO" id="GO:0060976">
    <property type="term" value="P:coronary vasculature development"/>
    <property type="evidence" value="ECO:0000250"/>
    <property type="project" value="UniProtKB"/>
</dbReference>
<dbReference type="GO" id="GO:0042756">
    <property type="term" value="P:drinking behavior"/>
    <property type="evidence" value="ECO:0000315"/>
    <property type="project" value="UniProtKB"/>
</dbReference>
<dbReference type="GO" id="GO:0007631">
    <property type="term" value="P:feeding behavior"/>
    <property type="evidence" value="ECO:0000315"/>
    <property type="project" value="RGD"/>
</dbReference>
<dbReference type="GO" id="GO:0007369">
    <property type="term" value="P:gastrulation"/>
    <property type="evidence" value="ECO:0007669"/>
    <property type="project" value="UniProtKB-KW"/>
</dbReference>
<dbReference type="GO" id="GO:0045776">
    <property type="term" value="P:negative regulation of blood pressure"/>
    <property type="evidence" value="ECO:0000314"/>
    <property type="project" value="RGD"/>
</dbReference>
<dbReference type="GO" id="GO:0040037">
    <property type="term" value="P:negative regulation of fibroblast growth factor receptor signaling pathway"/>
    <property type="evidence" value="ECO:0000266"/>
    <property type="project" value="RGD"/>
</dbReference>
<dbReference type="GO" id="GO:0010629">
    <property type="term" value="P:negative regulation of gene expression"/>
    <property type="evidence" value="ECO:0000266"/>
    <property type="project" value="RGD"/>
</dbReference>
<dbReference type="GO" id="GO:0003085">
    <property type="term" value="P:negative regulation of systemic arterial blood pressure"/>
    <property type="evidence" value="ECO:0000314"/>
    <property type="project" value="RGD"/>
</dbReference>
<dbReference type="GO" id="GO:1904706">
    <property type="term" value="P:negative regulation of vascular associated smooth muscle cell proliferation"/>
    <property type="evidence" value="ECO:0000266"/>
    <property type="project" value="RGD"/>
</dbReference>
<dbReference type="GO" id="GO:0045906">
    <property type="term" value="P:negative regulation of vasoconstriction"/>
    <property type="evidence" value="ECO:0000315"/>
    <property type="project" value="RGD"/>
</dbReference>
<dbReference type="GO" id="GO:0008284">
    <property type="term" value="P:positive regulation of cell population proliferation"/>
    <property type="evidence" value="ECO:0000315"/>
    <property type="project" value="RGD"/>
</dbReference>
<dbReference type="GO" id="GO:0051461">
    <property type="term" value="P:positive regulation of corticotropin secretion"/>
    <property type="evidence" value="ECO:0000315"/>
    <property type="project" value="RGD"/>
</dbReference>
<dbReference type="GO" id="GO:0051466">
    <property type="term" value="P:positive regulation of corticotropin-releasing hormone secretion"/>
    <property type="evidence" value="ECO:0000315"/>
    <property type="project" value="RGD"/>
</dbReference>
<dbReference type="GO" id="GO:1904022">
    <property type="term" value="P:positive regulation of G protein-coupled receptor internalization"/>
    <property type="evidence" value="ECO:0000314"/>
    <property type="project" value="UniProtKB"/>
</dbReference>
<dbReference type="GO" id="GO:0045823">
    <property type="term" value="P:positive regulation of heart contraction"/>
    <property type="evidence" value="ECO:0000315"/>
    <property type="project" value="UniProtKB"/>
</dbReference>
<dbReference type="GO" id="GO:0010460">
    <property type="term" value="P:positive regulation of heart rate"/>
    <property type="evidence" value="ECO:0000314"/>
    <property type="project" value="RGD"/>
</dbReference>
<dbReference type="GO" id="GO:0031652">
    <property type="term" value="P:positive regulation of heat generation"/>
    <property type="evidence" value="ECO:0000315"/>
    <property type="project" value="RGD"/>
</dbReference>
<dbReference type="GO" id="GO:1902895">
    <property type="term" value="P:positive regulation of miRNA transcription"/>
    <property type="evidence" value="ECO:0000266"/>
    <property type="project" value="RGD"/>
</dbReference>
<dbReference type="GO" id="GO:0042327">
    <property type="term" value="P:positive regulation of phosphorylation"/>
    <property type="evidence" value="ECO:0000315"/>
    <property type="project" value="RGD"/>
</dbReference>
<dbReference type="GO" id="GO:1905564">
    <property type="term" value="P:positive regulation of vascular endothelial cell proliferation"/>
    <property type="evidence" value="ECO:0000266"/>
    <property type="project" value="RGD"/>
</dbReference>
<dbReference type="GO" id="GO:0050878">
    <property type="term" value="P:regulation of body fluid levels"/>
    <property type="evidence" value="ECO:0000315"/>
    <property type="project" value="RGD"/>
</dbReference>
<dbReference type="GO" id="GO:0002026">
    <property type="term" value="P:regulation of the force of heart contraction"/>
    <property type="evidence" value="ECO:0000315"/>
    <property type="project" value="RGD"/>
</dbReference>
<dbReference type="InterPro" id="IPR026155">
    <property type="entry name" value="Apelin"/>
</dbReference>
<dbReference type="PANTHER" id="PTHR15953">
    <property type="entry name" value="APELIN"/>
    <property type="match status" value="1"/>
</dbReference>
<dbReference type="PANTHER" id="PTHR15953:SF0">
    <property type="entry name" value="APELIN"/>
    <property type="match status" value="1"/>
</dbReference>
<dbReference type="Pfam" id="PF15360">
    <property type="entry name" value="Apelin"/>
    <property type="match status" value="1"/>
</dbReference>
<gene>
    <name evidence="14" type="primary">Apln</name>
    <name type="synonym">Apel</name>
</gene>
<proteinExistence type="evidence at protein level"/>